<feature type="signal peptide" evidence="2">
    <location>
        <begin position="1"/>
        <end position="19"/>
    </location>
</feature>
<feature type="chain" id="PRO_0000411907" description="Pheromone-processing carboxypeptidase KEX1">
    <location>
        <begin position="20"/>
        <end position="702"/>
    </location>
</feature>
<feature type="topological domain" description="Lumenal" evidence="2">
    <location>
        <begin position="20"/>
        <end position="555"/>
    </location>
</feature>
<feature type="transmembrane region" description="Helical" evidence="2">
    <location>
        <begin position="556"/>
        <end position="576"/>
    </location>
</feature>
<feature type="topological domain" description="Cytoplasmic" evidence="2">
    <location>
        <begin position="577"/>
        <end position="702"/>
    </location>
</feature>
<feature type="region of interest" description="Disordered" evidence="4">
    <location>
        <begin position="491"/>
        <end position="548"/>
    </location>
</feature>
<feature type="region of interest" description="Disordered" evidence="4">
    <location>
        <begin position="582"/>
        <end position="603"/>
    </location>
</feature>
<feature type="region of interest" description="Disordered" evidence="4">
    <location>
        <begin position="660"/>
        <end position="702"/>
    </location>
</feature>
<feature type="compositionally biased region" description="Low complexity" evidence="4">
    <location>
        <begin position="524"/>
        <end position="548"/>
    </location>
</feature>
<feature type="compositionally biased region" description="Polar residues" evidence="4">
    <location>
        <begin position="587"/>
        <end position="598"/>
    </location>
</feature>
<feature type="compositionally biased region" description="Polar residues" evidence="4">
    <location>
        <begin position="692"/>
        <end position="702"/>
    </location>
</feature>
<feature type="active site" evidence="3">
    <location>
        <position position="184"/>
    </location>
</feature>
<feature type="active site" evidence="3">
    <location>
        <position position="394"/>
    </location>
</feature>
<feature type="active site" evidence="3">
    <location>
        <position position="452"/>
    </location>
</feature>
<feature type="glycosylation site" description="N-linked (GlcNAc...) asparagine" evidence="2">
    <location>
        <position position="85"/>
    </location>
</feature>
<feature type="glycosylation site" description="N-linked (GlcNAc...) asparagine" evidence="2">
    <location>
        <position position="122"/>
    </location>
</feature>
<feature type="glycosylation site" description="N-linked (GlcNAc...) asparagine" evidence="2">
    <location>
        <position position="441"/>
    </location>
</feature>
<feature type="glycosylation site" description="N-linked (GlcNAc...) asparagine" evidence="2">
    <location>
        <position position="449"/>
    </location>
</feature>
<sequence length="702" mass="78712">MKLILSTLIVFIHTLLVSALPTKEGSDPNSAKKYLVSDLPGLHENITPDNSIPLMFAGQLEIYPETDTHYFFWKFSDSNPETVTNRTIFWLNGGPGCSSMDGALLETGPFRINSQQQVISNNGSWHKMGDIIYVDQPAGTGFSYSDTYITDLDQVAEYFLKFMEKYYELFPEEIGYEIYFAGESYAGQYIPYIADAILQRNKKLVDGEHKYDLRGVLIGNGWVSPNEQSLSYLPFFKDHGLIDVHHPKWATLLAKHEQCQKIVNKIDSTFDDGVVHYYEVSSSTCEAILTDLLEYTQDTASEKDQRCVNMYDYTLRDSYPSCGMNWPYELVNVGPFLRQEKVMHQLNLINLKKWNECNGRVGRTFQARHSIPAVHLLPELAKEIPVMLFNGANDIICNSQGVLSYLQKLQWNGETGFTNKDNQISWIYDNKEVGYIIWERNISFINIYNSSHMVPYDLPDVSRALIDLITGKYDEKDVDGKKSFVTYPLGSRKESDASADGEENAGSDKVPGDSPSQTIDPMISSSTASSSSVESSLSSSTASADSDSTSSKFTRLIQLAVILVIFWGVYVLYASYKSRPSSIIKKPTNNTSNVTRSSAGKKKNVQWADQLNQFEDDERTQEPNQGIIAKAIGKITGSKDTRGRYAPVQRGNGNEYIDDIELGEGLSDPNVDEFIIGSDDDEEQGQAHSGAATHNQKQKPMN</sequence>
<accession>Q5AFP8</accession>
<accession>A0A1D8PQP4</accession>
<accession>Q3MPN8</accession>
<protein>
    <recommendedName>
        <fullName>Pheromone-processing carboxypeptidase KEX1</fullName>
        <ecNumber>3.4.16.6</ecNumber>
    </recommendedName>
    <alternativeName>
        <fullName>Carboxypeptidase D</fullName>
    </alternativeName>
</protein>
<name>KEX1_CANAL</name>
<comment type="function">
    <text evidence="1">Protease with a carboxypeptidase B-like function involved in the C-terminal processing of the lysine and arginine residues from protein precursors. Promotes cell fusion and is involved in the programmed cell death (By similarity).</text>
</comment>
<comment type="catalytic activity">
    <reaction>
        <text>Preferential release of a C-terminal arginine or lysine residue.</text>
        <dbReference type="EC" id="3.4.16.6"/>
    </reaction>
</comment>
<comment type="subcellular location">
    <subcellularLocation>
        <location evidence="1">Golgi apparatus</location>
        <location evidence="1">trans-Golgi network membrane</location>
        <topology evidence="1">Single-pass type I membrane protein</topology>
    </subcellularLocation>
</comment>
<comment type="similarity">
    <text evidence="5">Belongs to the peptidase S10 family.</text>
</comment>
<organism>
    <name type="scientific">Candida albicans (strain SC5314 / ATCC MYA-2876)</name>
    <name type="common">Yeast</name>
    <dbReference type="NCBI Taxonomy" id="237561"/>
    <lineage>
        <taxon>Eukaryota</taxon>
        <taxon>Fungi</taxon>
        <taxon>Dikarya</taxon>
        <taxon>Ascomycota</taxon>
        <taxon>Saccharomycotina</taxon>
        <taxon>Pichiomycetes</taxon>
        <taxon>Debaryomycetaceae</taxon>
        <taxon>Candida/Lodderomyces clade</taxon>
        <taxon>Candida</taxon>
    </lineage>
</organism>
<dbReference type="EC" id="3.4.16.6"/>
<dbReference type="EMBL" id="AP006852">
    <property type="protein sequence ID" value="BAE44622.1"/>
    <property type="molecule type" value="Genomic_DNA"/>
</dbReference>
<dbReference type="EMBL" id="CP017629">
    <property type="protein sequence ID" value="AOW30469.1"/>
    <property type="molecule type" value="Genomic_DNA"/>
</dbReference>
<dbReference type="RefSeq" id="XP_720314.1">
    <property type="nucleotide sequence ID" value="XM_715221.1"/>
</dbReference>
<dbReference type="SMR" id="Q5AFP8"/>
<dbReference type="FunCoup" id="Q5AFP8">
    <property type="interactions" value="129"/>
</dbReference>
<dbReference type="STRING" id="237561.Q5AFP8"/>
<dbReference type="ESTHER" id="canal-q5afp8">
    <property type="family name" value="Carboxypeptidase_S10"/>
</dbReference>
<dbReference type="MEROPS" id="S10.007"/>
<dbReference type="GlyCosmos" id="Q5AFP8">
    <property type="glycosylation" value="4 sites, No reported glycans"/>
</dbReference>
<dbReference type="EnsemblFungi" id="C7_00940W_A-T">
    <property type="protein sequence ID" value="C7_00940W_A-T-p1"/>
    <property type="gene ID" value="C7_00940W_A"/>
</dbReference>
<dbReference type="GeneID" id="3637955"/>
<dbReference type="KEGG" id="cal:CAALFM_C700940WA"/>
<dbReference type="CGD" id="CAL0000182553">
    <property type="gene designation" value="KEX1"/>
</dbReference>
<dbReference type="VEuPathDB" id="FungiDB:C7_00940W_A"/>
<dbReference type="eggNOG" id="KOG1282">
    <property type="taxonomic scope" value="Eukaryota"/>
</dbReference>
<dbReference type="HOGENOM" id="CLU_008523_11_2_1"/>
<dbReference type="InParanoid" id="Q5AFP8"/>
<dbReference type="OMA" id="PLMFAGQ"/>
<dbReference type="OrthoDB" id="443318at2759"/>
<dbReference type="Proteomes" id="UP000000559">
    <property type="component" value="Chromosome 7"/>
</dbReference>
<dbReference type="GO" id="GO:0016020">
    <property type="term" value="C:membrane"/>
    <property type="evidence" value="ECO:0007669"/>
    <property type="project" value="UniProtKB-KW"/>
</dbReference>
<dbReference type="GO" id="GO:0005802">
    <property type="term" value="C:trans-Golgi network"/>
    <property type="evidence" value="ECO:0000318"/>
    <property type="project" value="GO_Central"/>
</dbReference>
<dbReference type="GO" id="GO:0004185">
    <property type="term" value="F:serine-type carboxypeptidase activity"/>
    <property type="evidence" value="ECO:0000318"/>
    <property type="project" value="GO_Central"/>
</dbReference>
<dbReference type="GO" id="GO:0006915">
    <property type="term" value="P:apoptotic process"/>
    <property type="evidence" value="ECO:0007669"/>
    <property type="project" value="UniProtKB-KW"/>
</dbReference>
<dbReference type="GO" id="GO:0016485">
    <property type="term" value="P:protein processing"/>
    <property type="evidence" value="ECO:0000315"/>
    <property type="project" value="CGD"/>
</dbReference>
<dbReference type="GO" id="GO:0001897">
    <property type="term" value="P:symbiont-mediated cytolysis of host cell"/>
    <property type="evidence" value="ECO:0000315"/>
    <property type="project" value="CGD"/>
</dbReference>
<dbReference type="FunFam" id="3.40.50.1820:FF:000289">
    <property type="entry name" value="Pheromone-processing carboxypeptidase KEX1"/>
    <property type="match status" value="1"/>
</dbReference>
<dbReference type="Gene3D" id="3.40.50.1820">
    <property type="entry name" value="alpha/beta hydrolase"/>
    <property type="match status" value="1"/>
</dbReference>
<dbReference type="InterPro" id="IPR029058">
    <property type="entry name" value="AB_hydrolase_fold"/>
</dbReference>
<dbReference type="InterPro" id="IPR001563">
    <property type="entry name" value="Peptidase_S10"/>
</dbReference>
<dbReference type="InterPro" id="IPR033124">
    <property type="entry name" value="Ser_caboxypep_his_AS"/>
</dbReference>
<dbReference type="PANTHER" id="PTHR11802:SF190">
    <property type="entry name" value="PHEROMONE-PROCESSING CARBOXYPEPTIDASE KEX1"/>
    <property type="match status" value="1"/>
</dbReference>
<dbReference type="PANTHER" id="PTHR11802">
    <property type="entry name" value="SERINE PROTEASE FAMILY S10 SERINE CARBOXYPEPTIDASE"/>
    <property type="match status" value="1"/>
</dbReference>
<dbReference type="Pfam" id="PF00450">
    <property type="entry name" value="Peptidase_S10"/>
    <property type="match status" value="1"/>
</dbReference>
<dbReference type="PRINTS" id="PR00724">
    <property type="entry name" value="CRBOXYPTASEC"/>
</dbReference>
<dbReference type="SUPFAM" id="SSF53474">
    <property type="entry name" value="alpha/beta-Hydrolases"/>
    <property type="match status" value="1"/>
</dbReference>
<dbReference type="PROSITE" id="PS00560">
    <property type="entry name" value="CARBOXYPEPT_SER_HIS"/>
    <property type="match status" value="1"/>
</dbReference>
<evidence type="ECO:0000250" key="1"/>
<evidence type="ECO:0000255" key="2"/>
<evidence type="ECO:0000255" key="3">
    <source>
        <dbReference type="PROSITE-ProRule" id="PRU10075"/>
    </source>
</evidence>
<evidence type="ECO:0000256" key="4">
    <source>
        <dbReference type="SAM" id="MobiDB-lite"/>
    </source>
</evidence>
<evidence type="ECO:0000305" key="5"/>
<proteinExistence type="inferred from homology"/>
<gene>
    <name type="primary">KEX1</name>
    <name type="ordered locus">CAALFM_C700940WA</name>
    <name type="ORF">CaJ7.0112</name>
    <name type="ORF">CaO19.7020</name>
</gene>
<keyword id="KW-0053">Apoptosis</keyword>
<keyword id="KW-0121">Carboxypeptidase</keyword>
<keyword id="KW-0325">Glycoprotein</keyword>
<keyword id="KW-0333">Golgi apparatus</keyword>
<keyword id="KW-0378">Hydrolase</keyword>
<keyword id="KW-0472">Membrane</keyword>
<keyword id="KW-0645">Protease</keyword>
<keyword id="KW-1185">Reference proteome</keyword>
<keyword id="KW-0732">Signal</keyword>
<keyword id="KW-0812">Transmembrane</keyword>
<keyword id="KW-1133">Transmembrane helix</keyword>
<reference key="1">
    <citation type="journal article" date="2005" name="Genetics">
        <title>Sequence finishing and gene mapping for Candida albicans chromosome 7 and syntenic analysis against the Saccharomyces cerevisiae genome.</title>
        <authorList>
            <person name="Chibana H."/>
            <person name="Oka N."/>
            <person name="Nakayama H."/>
            <person name="Aoyama T."/>
            <person name="Magee B.B."/>
            <person name="Magee P.T."/>
            <person name="Mikami Y."/>
        </authorList>
    </citation>
    <scope>NUCLEOTIDE SEQUENCE [LARGE SCALE GENOMIC DNA]</scope>
    <source>
        <strain>SC5314 / ATCC MYA-2876</strain>
    </source>
</reference>
<reference key="2">
    <citation type="journal article" date="2004" name="Proc. Natl. Acad. Sci. U.S.A.">
        <title>The diploid genome sequence of Candida albicans.</title>
        <authorList>
            <person name="Jones T."/>
            <person name="Federspiel N.A."/>
            <person name="Chibana H."/>
            <person name="Dungan J."/>
            <person name="Kalman S."/>
            <person name="Magee B.B."/>
            <person name="Newport G."/>
            <person name="Thorstenson Y.R."/>
            <person name="Agabian N."/>
            <person name="Magee P.T."/>
            <person name="Davis R.W."/>
            <person name="Scherer S."/>
        </authorList>
    </citation>
    <scope>NUCLEOTIDE SEQUENCE [LARGE SCALE GENOMIC DNA]</scope>
    <source>
        <strain>SC5314 / ATCC MYA-2876</strain>
    </source>
</reference>
<reference key="3">
    <citation type="journal article" date="2007" name="Genome Biol.">
        <title>Assembly of the Candida albicans genome into sixteen supercontigs aligned on the eight chromosomes.</title>
        <authorList>
            <person name="van het Hoog M."/>
            <person name="Rast T.J."/>
            <person name="Martchenko M."/>
            <person name="Grindle S."/>
            <person name="Dignard D."/>
            <person name="Hogues H."/>
            <person name="Cuomo C."/>
            <person name="Berriman M."/>
            <person name="Scherer S."/>
            <person name="Magee B.B."/>
            <person name="Whiteway M."/>
            <person name="Chibana H."/>
            <person name="Nantel A."/>
            <person name="Magee P.T."/>
        </authorList>
    </citation>
    <scope>GENOME REANNOTATION</scope>
    <source>
        <strain>SC5314 / ATCC MYA-2876</strain>
    </source>
</reference>
<reference key="4">
    <citation type="journal article" date="2013" name="Genome Biol.">
        <title>Assembly of a phased diploid Candida albicans genome facilitates allele-specific measurements and provides a simple model for repeat and indel structure.</title>
        <authorList>
            <person name="Muzzey D."/>
            <person name="Schwartz K."/>
            <person name="Weissman J.S."/>
            <person name="Sherlock G."/>
        </authorList>
    </citation>
    <scope>NUCLEOTIDE SEQUENCE [LARGE SCALE GENOMIC DNA]</scope>
    <scope>GENOME REANNOTATION</scope>
    <source>
        <strain>SC5314 / ATCC MYA-2876</strain>
    </source>
</reference>